<dbReference type="EC" id="1.14.14.1"/>
<dbReference type="EMBL" id="J02861">
    <property type="protein sequence ID" value="AAA41785.1"/>
    <property type="molecule type" value="mRNA"/>
</dbReference>
<dbReference type="EMBL" id="M33994">
    <property type="protein sequence ID" value="AAA41063.1"/>
    <property type="molecule type" value="mRNA"/>
</dbReference>
<dbReference type="EMBL" id="M82855">
    <property type="protein sequence ID" value="AAA41059.1"/>
    <property type="molecule type" value="Genomic_DNA"/>
</dbReference>
<dbReference type="EMBL" id="M82849">
    <property type="protein sequence ID" value="AAA41059.1"/>
    <property type="status" value="JOINED"/>
    <property type="molecule type" value="Genomic_DNA"/>
</dbReference>
<dbReference type="EMBL" id="M82850">
    <property type="protein sequence ID" value="AAA41059.1"/>
    <property type="status" value="JOINED"/>
    <property type="molecule type" value="Genomic_DNA"/>
</dbReference>
<dbReference type="EMBL" id="M82846">
    <property type="protein sequence ID" value="AAA41059.1"/>
    <property type="status" value="JOINED"/>
    <property type="molecule type" value="Genomic_DNA"/>
</dbReference>
<dbReference type="EMBL" id="M82848">
    <property type="protein sequence ID" value="AAA41059.1"/>
    <property type="status" value="JOINED"/>
    <property type="molecule type" value="Genomic_DNA"/>
</dbReference>
<dbReference type="EMBL" id="M82853">
    <property type="protein sequence ID" value="AAA41059.1"/>
    <property type="status" value="JOINED"/>
    <property type="molecule type" value="Genomic_DNA"/>
</dbReference>
<dbReference type="EMBL" id="M82851">
    <property type="protein sequence ID" value="AAA41059.1"/>
    <property type="status" value="JOINED"/>
    <property type="molecule type" value="Genomic_DNA"/>
</dbReference>
<dbReference type="EMBL" id="M82852">
    <property type="protein sequence ID" value="AAA41059.1"/>
    <property type="status" value="JOINED"/>
    <property type="molecule type" value="Genomic_DNA"/>
</dbReference>
<dbReference type="EMBL" id="M32277">
    <property type="protein sequence ID" value="AAA41031.1"/>
    <property type="molecule type" value="mRNA"/>
</dbReference>
<dbReference type="PIR" id="A36122">
    <property type="entry name" value="A36122"/>
</dbReference>
<dbReference type="PIR" id="I52410">
    <property type="entry name" value="I52410"/>
</dbReference>
<dbReference type="RefSeq" id="NP_612523.1">
    <property type="nucleotide sequence ID" value="NM_138514.1"/>
</dbReference>
<dbReference type="SMR" id="P20814"/>
<dbReference type="FunCoup" id="P20814">
    <property type="interactions" value="52"/>
</dbReference>
<dbReference type="STRING" id="10116.ENSRNOP00000067531"/>
<dbReference type="ChEMBL" id="CHEMBL3509596"/>
<dbReference type="GlyGen" id="P20814">
    <property type="glycosylation" value="1 site"/>
</dbReference>
<dbReference type="iPTMnet" id="P20814"/>
<dbReference type="PhosphoSitePlus" id="P20814"/>
<dbReference type="PaxDb" id="10116-ENSRNOP00000067531"/>
<dbReference type="GeneID" id="171521"/>
<dbReference type="KEGG" id="rno:171521"/>
<dbReference type="AGR" id="RGD:620363"/>
<dbReference type="CTD" id="171521"/>
<dbReference type="RGD" id="620363">
    <property type="gene designation" value="Cyp2c13"/>
</dbReference>
<dbReference type="eggNOG" id="KOG0156">
    <property type="taxonomic scope" value="Eukaryota"/>
</dbReference>
<dbReference type="InParanoid" id="P20814"/>
<dbReference type="OrthoDB" id="3934656at2759"/>
<dbReference type="PhylomeDB" id="P20814"/>
<dbReference type="PRO" id="PR:P20814"/>
<dbReference type="Proteomes" id="UP000002494">
    <property type="component" value="Unplaced"/>
</dbReference>
<dbReference type="GO" id="GO:0005737">
    <property type="term" value="C:cytoplasm"/>
    <property type="evidence" value="ECO:0000318"/>
    <property type="project" value="GO_Central"/>
</dbReference>
<dbReference type="GO" id="GO:0005789">
    <property type="term" value="C:endoplasmic reticulum membrane"/>
    <property type="evidence" value="ECO:0007669"/>
    <property type="project" value="UniProtKB-SubCell"/>
</dbReference>
<dbReference type="GO" id="GO:0043231">
    <property type="term" value="C:intracellular membrane-bounded organelle"/>
    <property type="evidence" value="ECO:0000318"/>
    <property type="project" value="GO_Central"/>
</dbReference>
<dbReference type="GO" id="GO:0020037">
    <property type="term" value="F:heme binding"/>
    <property type="evidence" value="ECO:0000318"/>
    <property type="project" value="GO_Central"/>
</dbReference>
<dbReference type="GO" id="GO:0005506">
    <property type="term" value="F:iron ion binding"/>
    <property type="evidence" value="ECO:0007669"/>
    <property type="project" value="InterPro"/>
</dbReference>
<dbReference type="GO" id="GO:0004497">
    <property type="term" value="F:monooxygenase activity"/>
    <property type="evidence" value="ECO:0000304"/>
    <property type="project" value="RGD"/>
</dbReference>
<dbReference type="GO" id="GO:0016712">
    <property type="term" value="F:oxidoreductase activity, acting on paired donors, with incorporation or reduction of molecular oxygen, reduced flavin or flavoprotein as one donor, and incorporation of one atom of oxygen"/>
    <property type="evidence" value="ECO:0000318"/>
    <property type="project" value="GO_Central"/>
</dbReference>
<dbReference type="GO" id="GO:0006082">
    <property type="term" value="P:organic acid metabolic process"/>
    <property type="evidence" value="ECO:0000318"/>
    <property type="project" value="GO_Central"/>
</dbReference>
<dbReference type="GO" id="GO:0006805">
    <property type="term" value="P:xenobiotic metabolic process"/>
    <property type="evidence" value="ECO:0000318"/>
    <property type="project" value="GO_Central"/>
</dbReference>
<dbReference type="CDD" id="cd20665">
    <property type="entry name" value="CYP2C-like"/>
    <property type="match status" value="1"/>
</dbReference>
<dbReference type="FunFam" id="1.10.630.10:FF:000299">
    <property type="entry name" value="Cytochrome P450 2C9"/>
    <property type="match status" value="1"/>
</dbReference>
<dbReference type="Gene3D" id="1.10.630.10">
    <property type="entry name" value="Cytochrome P450"/>
    <property type="match status" value="1"/>
</dbReference>
<dbReference type="InterPro" id="IPR001128">
    <property type="entry name" value="Cyt_P450"/>
</dbReference>
<dbReference type="InterPro" id="IPR017972">
    <property type="entry name" value="Cyt_P450_CS"/>
</dbReference>
<dbReference type="InterPro" id="IPR002401">
    <property type="entry name" value="Cyt_P450_E_grp-I"/>
</dbReference>
<dbReference type="InterPro" id="IPR036396">
    <property type="entry name" value="Cyt_P450_sf"/>
</dbReference>
<dbReference type="InterPro" id="IPR050182">
    <property type="entry name" value="Cytochrome_P450_fam2"/>
</dbReference>
<dbReference type="PANTHER" id="PTHR24300:SF140">
    <property type="entry name" value="CYTOCHROME P450 2C40-RELATED"/>
    <property type="match status" value="1"/>
</dbReference>
<dbReference type="PANTHER" id="PTHR24300">
    <property type="entry name" value="CYTOCHROME P450 508A4-RELATED"/>
    <property type="match status" value="1"/>
</dbReference>
<dbReference type="Pfam" id="PF00067">
    <property type="entry name" value="p450"/>
    <property type="match status" value="1"/>
</dbReference>
<dbReference type="PRINTS" id="PR00463">
    <property type="entry name" value="EP450I"/>
</dbReference>
<dbReference type="PRINTS" id="PR00385">
    <property type="entry name" value="P450"/>
</dbReference>
<dbReference type="SUPFAM" id="SSF48264">
    <property type="entry name" value="Cytochrome P450"/>
    <property type="match status" value="1"/>
</dbReference>
<dbReference type="PROSITE" id="PS00086">
    <property type="entry name" value="CYTOCHROME_P450"/>
    <property type="match status" value="1"/>
</dbReference>
<reference key="1">
    <citation type="journal article" date="1989" name="Biochemistry">
        <title>Characterization of a cDNA for rat P-450g, a highly polymorphic, male-specific cytochrome in the P-450IIC subfamily.</title>
        <authorList>
            <person name="McClellan-Green P.D."/>
            <person name="Negishi M."/>
            <person name="Goldstein J.A."/>
        </authorList>
    </citation>
    <scope>NUCLEOTIDE SEQUENCE [MRNA] (G+)</scope>
    <source>
        <strain>Sprague-Dawley</strain>
        <tissue>Liver</tissue>
    </source>
</reference>
<reference key="2">
    <citation type="journal article" date="1990" name="Mol. Endocrinol.">
        <title>Structural and regulatory analysis of the male-specific rat liver cytochrome P-450 g: repression by continuous growth hormone administration.</title>
        <authorList>
            <person name="Zaphiropoulos P.G."/>
            <person name="Stroem A."/>
            <person name="Robertson J.A."/>
            <person name="Gustafsson J.-A."/>
        </authorList>
    </citation>
    <scope>NUCLEOTIDE SEQUENCE [MRNA] (G-)</scope>
    <source>
        <strain>Sprague-Dawley</strain>
        <tissue>Liver</tissue>
    </source>
</reference>
<reference key="3">
    <citation type="submission" date="1991-12" db="EMBL/GenBank/DDBJ databases">
        <title>Gene structure and expression of the rat cytochrome P450IIC13, a polymorphic male-specific cytochrome in the P450IIC subfamily.</title>
        <authorList>
            <person name="Eguchi H."/>
            <person name="Westin S."/>
            <person name="Stroem A."/>
            <person name="Gustafsson J.-A."/>
            <person name="Zaphiropolos P.G."/>
        </authorList>
    </citation>
    <scope>NUCLEOTIDE SEQUENCE [GENOMIC DNA]</scope>
</reference>
<reference key="4">
    <citation type="journal article" date="1990" name="Biochemistry">
        <title>Characterization of a cDNA for the unexpressed form of cytochrome P-450g from the (-g) rat and differentiation of its mRNA from that of the (+g) phenotype using specific oligoprobes.</title>
        <authorList>
            <person name="Yeowell H.N."/>
            <person name="McClellan-Green P.D."/>
            <person name="Negishi M."/>
            <person name="Goldstein J.A."/>
        </authorList>
    </citation>
    <scope>NUCLEOTIDE SEQUENCE [MRNA] OF 19-468 (G-)</scope>
    <source>
        <strain>Sprague-Dawley</strain>
        <tissue>Liver</tissue>
    </source>
</reference>
<reference key="5">
    <citation type="journal article" date="1986" name="J. Biochem.">
        <title>Purification and characterization of three male-specific and one female-specific forms of cytochrome P-450 from rat liver microsomes.</title>
        <authorList>
            <person name="Matsumoto T."/>
            <person name="Emi Y."/>
            <person name="Kawabata S."/>
            <person name="Omura T."/>
        </authorList>
    </citation>
    <scope>PROTEIN SEQUENCE OF 1-30 (G+)</scope>
</reference>
<gene>
    <name type="primary">Cyp2c13</name>
    <name type="synonym">Cyp2c-13</name>
</gene>
<comment type="function">
    <text>Cytochromes P450 are a group of heme-thiolate monooxygenases. In liver microsomes, this enzyme is involved in an NADPH-dependent electron transport pathway. It oxidizes a variety of structurally unrelated compounds, including steroids, fatty acids, and xenobiotics.</text>
</comment>
<comment type="catalytic activity">
    <reaction>
        <text>an organic molecule + reduced [NADPH--hemoprotein reductase] + O2 = an alcohol + oxidized [NADPH--hemoprotein reductase] + H2O + H(+)</text>
        <dbReference type="Rhea" id="RHEA:17149"/>
        <dbReference type="Rhea" id="RHEA-COMP:11964"/>
        <dbReference type="Rhea" id="RHEA-COMP:11965"/>
        <dbReference type="ChEBI" id="CHEBI:15377"/>
        <dbReference type="ChEBI" id="CHEBI:15378"/>
        <dbReference type="ChEBI" id="CHEBI:15379"/>
        <dbReference type="ChEBI" id="CHEBI:30879"/>
        <dbReference type="ChEBI" id="CHEBI:57618"/>
        <dbReference type="ChEBI" id="CHEBI:58210"/>
        <dbReference type="ChEBI" id="CHEBI:142491"/>
        <dbReference type="EC" id="1.14.14.1"/>
    </reaction>
</comment>
<comment type="cofactor">
    <cofactor evidence="1">
        <name>heme</name>
        <dbReference type="ChEBI" id="CHEBI:30413"/>
    </cofactor>
</comment>
<comment type="subcellular location">
    <subcellularLocation>
        <location>Endoplasmic reticulum membrane</location>
        <topology>Peripheral membrane protein</topology>
    </subcellularLocation>
    <subcellularLocation>
        <location>Microsome membrane</location>
        <topology>Peripheral membrane protein</topology>
    </subcellularLocation>
</comment>
<comment type="tissue specificity">
    <text>Liver, and to a lesser extent in prostate, kidney, heart and brain.</text>
</comment>
<comment type="induction">
    <text>P450 can be induced to high levels in liver and other tissues by various foreign compounds, including drugs, pesticides, and carcinogens.</text>
</comment>
<comment type="miscellaneous">
    <text>The G(-) form of this protein is thought to be unexpressed.</text>
</comment>
<comment type="similarity">
    <text evidence="2">Belongs to the cytochrome P450 family.</text>
</comment>
<protein>
    <recommendedName>
        <fullName>Cytochrome P450 2C13, male-specific</fullName>
        <ecNumber>1.14.14.1</ecNumber>
    </recommendedName>
    <alternativeName>
        <fullName>CYPIIC13</fullName>
    </alternativeName>
    <alternativeName>
        <fullName>Cytochrome P-450g</fullName>
    </alternativeName>
    <alternativeName>
        <fullName>Cytochrome P450-G</fullName>
    </alternativeName>
    <alternativeName>
        <fullName>Cytochrome P450-UT-5</fullName>
    </alternativeName>
</protein>
<keyword id="KW-0903">Direct protein sequencing</keyword>
<keyword id="KW-0256">Endoplasmic reticulum</keyword>
<keyword id="KW-0349">Heme</keyword>
<keyword id="KW-0408">Iron</keyword>
<keyword id="KW-0472">Membrane</keyword>
<keyword id="KW-0479">Metal-binding</keyword>
<keyword id="KW-0492">Microsome</keyword>
<keyword id="KW-0503">Monooxygenase</keyword>
<keyword id="KW-0560">Oxidoreductase</keyword>
<keyword id="KW-1185">Reference proteome</keyword>
<feature type="chain" id="PRO_0000051703" description="Cytochrome P450 2C13, male-specific">
    <location>
        <begin position="1"/>
        <end position="490"/>
    </location>
</feature>
<feature type="binding site" description="axial binding residue">
    <location>
        <position position="435"/>
    </location>
    <ligand>
        <name>heme</name>
        <dbReference type="ChEBI" id="CHEBI:30413"/>
    </ligand>
    <ligandPart>
        <name>Fe</name>
        <dbReference type="ChEBI" id="CHEBI:18248"/>
    </ligandPart>
</feature>
<feature type="sequence variant" description="In G- phenotype.">
    <original>P</original>
    <variation>L</variation>
    <location>
        <position position="22"/>
    </location>
</feature>
<feature type="sequence variant" description="In G- phenotype.">
    <original>S</original>
    <variation>C</variation>
    <location>
        <position position="180"/>
    </location>
</feature>
<feature type="sequence variant" description="In G- phenotype.">
    <original>F</original>
    <variation>L</variation>
    <location>
        <position position="234"/>
    </location>
</feature>
<feature type="sequence variant" description="In G- phenotype.">
    <original>H</original>
    <variation>Y</variation>
    <location>
        <position position="237"/>
    </location>
</feature>
<feature type="sequence variant" description="In G- phenotype.">
    <original>L</original>
    <variation>V</variation>
    <location>
        <position position="240"/>
    </location>
</feature>
<feature type="sequence variant" description="In G- phenotype.">
    <original>C</original>
    <variation>S</variation>
    <location>
        <position position="338"/>
    </location>
</feature>
<feature type="sequence variant" description="In G- phenotype.">
    <original>E</original>
    <variation>D</variation>
    <location>
        <position position="369"/>
    </location>
</feature>
<feature type="sequence conflict" description="In Ref. 3; AAA41059." evidence="2" ref="3">
    <original>H</original>
    <variation>Q</variation>
    <location>
        <position position="353"/>
    </location>
</feature>
<name>CP2CD_RAT</name>
<proteinExistence type="evidence at protein level"/>
<organism>
    <name type="scientific">Rattus norvegicus</name>
    <name type="common">Rat</name>
    <dbReference type="NCBI Taxonomy" id="10116"/>
    <lineage>
        <taxon>Eukaryota</taxon>
        <taxon>Metazoa</taxon>
        <taxon>Chordata</taxon>
        <taxon>Craniata</taxon>
        <taxon>Vertebrata</taxon>
        <taxon>Euteleostomi</taxon>
        <taxon>Mammalia</taxon>
        <taxon>Eutheria</taxon>
        <taxon>Euarchontoglires</taxon>
        <taxon>Glires</taxon>
        <taxon>Rodentia</taxon>
        <taxon>Myomorpha</taxon>
        <taxon>Muroidea</taxon>
        <taxon>Muridae</taxon>
        <taxon>Murinae</taxon>
        <taxon>Rattus</taxon>
    </lineage>
</organism>
<evidence type="ECO:0000250" key="1"/>
<evidence type="ECO:0000305" key="2"/>
<sequence length="490" mass="55860">MDPVVVLLLSLFFLLFLSLWRPSSGRGKLPPGPTPLPIIGNFFQVDMKDIRQSLTNFSKTYGPVYTLYVGSQPTVVLHGYEALKEALVDHGEEFSGRGRLPICEKVAKGQGIAFSHGNVWKATRHFTVKTLRNLGMGKGTIEDKVQEEAKWLVKELKKTNGSPCDPQFIMGCAPGNVICSIILQNRFDYEDKDFLNLIEKVNEAVKIISSPGIQVFNIFPILLDYCPGNHNIYFKNHTWLKSYLLEKIKEHEESLDVSNPRDFIDYFLIERNQENANQWMNYTLEHLAIMVTDLFFAGIETVSSTMRFALLLLMKYPHVTAKVQEEIDHVIGRHRSPCMQDRSHMPYTNAMVHEVQRYIDIGPNGLLHEVTCDTKFRNYFIPKGTAVLTSLTSVLHDSKEFPNPEMFDPGHFLDENGNFKKSDYFIPFSAGKRMCLGESLARMELFLFLTTILQNFKLKSLVDPKDINTTPICSSLSSVPPTFQMRFIPL</sequence>
<accession>P20814</accession>
<accession>P22693</accession>
<accession>Q64587</accession>